<feature type="chain" id="PRO_0000459378" description="DNA damage up-regulated protein">
    <location>
        <begin position="1"/>
        <end position="186"/>
    </location>
</feature>
<feature type="region of interest" description="Disordered" evidence="1">
    <location>
        <begin position="147"/>
        <end position="166"/>
    </location>
</feature>
<feature type="mutagenesis site" description="Abolishes DNA damage repair function as well as DDUP foci formation and enrichment of DDUP in chromatin upon DNA damage. Abolishes interaction with H2AX and RAD18." evidence="2">
    <original>T</original>
    <variation>A</variation>
    <location>
        <position position="174"/>
    </location>
</feature>
<feature type="mutagenesis site" description="Does not affect interaction with H2AX or RAD18." evidence="2">
    <original>T</original>
    <variation>D</variation>
    <location>
        <position position="174"/>
    </location>
</feature>
<proteinExistence type="evidence at protein level"/>
<comment type="function">
    <text evidence="2">Promotes DNA damage repair through both homologous recombination repair (HRR) and post-replication repair (PRR) mechanisms (PubMed:35849344). Enhances the retention of DNA damage response protein RAD18 at sites of DNA damage (PubMed:35849344). This allows for HRR via association of RAD18 with RAD51C and for PRR via RAD18-mediated promotion of PCNA monoubiquitination (PubMed:35849344).</text>
</comment>
<comment type="subunit">
    <text evidence="2">Interacts with DNA damage response proteins ATR, H2AX, PCNA, RAD18 and RAD51C (PubMed:35849344). Forms a complex with H2AX and RAD18 following DDUP phosphorylation (PubMed:35849344).</text>
</comment>
<comment type="subcellular location">
    <subcellularLocation>
        <location evidence="2">Nucleus</location>
    </subcellularLocation>
    <subcellularLocation>
        <location evidence="2">Chromosome</location>
    </subcellularLocation>
    <text evidence="2">Forms DNA damage-induced foci.</text>
</comment>
<comment type="induction">
    <text evidence="2">By DNA damage.</text>
</comment>
<comment type="PTM">
    <text evidence="2">Phosphorylated in an ATR-dependent manner; phosphorylation is required for interaction with H2AX and RAD18 and for DDUP-mediated DNA damage repair.</text>
</comment>
<comment type="miscellaneous">
    <text evidence="2">Treatment of cells with ATR inhibitor Berzosertib abolishes the interaction of DDUP with H2AX, RAD18 and RAD51C and inhibits formation of DDUP foci, leading to hypersensitivity of cancer cells to DNA-damaging chemotherapeutics.</text>
</comment>
<reference evidence="4" key="1">
    <citation type="journal article" date="2005" name="Nature">
        <title>Generation and annotation of the DNA sequences of human chromosomes 2 and 4.</title>
        <authorList>
            <person name="Hillier L.W."/>
            <person name="Graves T.A."/>
            <person name="Fulton R.S."/>
            <person name="Fulton L.A."/>
            <person name="Pepin K.H."/>
            <person name="Minx P."/>
            <person name="Wagner-McPherson C."/>
            <person name="Layman D."/>
            <person name="Wylie K."/>
            <person name="Sekhon M."/>
            <person name="Becker M.C."/>
            <person name="Fewell G.A."/>
            <person name="Delehaunty K.D."/>
            <person name="Miner T.L."/>
            <person name="Nash W.E."/>
            <person name="Kremitzki C."/>
            <person name="Oddy L."/>
            <person name="Du H."/>
            <person name="Sun H."/>
            <person name="Bradshaw-Cordum H."/>
            <person name="Ali J."/>
            <person name="Carter J."/>
            <person name="Cordes M."/>
            <person name="Harris A."/>
            <person name="Isak A."/>
            <person name="van Brunt A."/>
            <person name="Nguyen C."/>
            <person name="Du F."/>
            <person name="Courtney L."/>
            <person name="Kalicki J."/>
            <person name="Ozersky P."/>
            <person name="Abbott S."/>
            <person name="Armstrong J."/>
            <person name="Belter E.A."/>
            <person name="Caruso L."/>
            <person name="Cedroni M."/>
            <person name="Cotton M."/>
            <person name="Davidson T."/>
            <person name="Desai A."/>
            <person name="Elliott G."/>
            <person name="Erb T."/>
            <person name="Fronick C."/>
            <person name="Gaige T."/>
            <person name="Haakenson W."/>
            <person name="Haglund K."/>
            <person name="Holmes A."/>
            <person name="Harkins R."/>
            <person name="Kim K."/>
            <person name="Kruchowski S.S."/>
            <person name="Strong C.M."/>
            <person name="Grewal N."/>
            <person name="Goyea E."/>
            <person name="Hou S."/>
            <person name="Levy A."/>
            <person name="Martinka S."/>
            <person name="Mead K."/>
            <person name="McLellan M.D."/>
            <person name="Meyer R."/>
            <person name="Randall-Maher J."/>
            <person name="Tomlinson C."/>
            <person name="Dauphin-Kohlberg S."/>
            <person name="Kozlowicz-Reilly A."/>
            <person name="Shah N."/>
            <person name="Swearengen-Shahid S."/>
            <person name="Snider J."/>
            <person name="Strong J.T."/>
            <person name="Thompson J."/>
            <person name="Yoakum M."/>
            <person name="Leonard S."/>
            <person name="Pearman C."/>
            <person name="Trani L."/>
            <person name="Radionenko M."/>
            <person name="Waligorski J.E."/>
            <person name="Wang C."/>
            <person name="Rock S.M."/>
            <person name="Tin-Wollam A.-M."/>
            <person name="Maupin R."/>
            <person name="Latreille P."/>
            <person name="Wendl M.C."/>
            <person name="Yang S.-P."/>
            <person name="Pohl C."/>
            <person name="Wallis J.W."/>
            <person name="Spieth J."/>
            <person name="Bieri T.A."/>
            <person name="Berkowicz N."/>
            <person name="Nelson J.O."/>
            <person name="Osborne J."/>
            <person name="Ding L."/>
            <person name="Meyer R."/>
            <person name="Sabo A."/>
            <person name="Shotland Y."/>
            <person name="Sinha P."/>
            <person name="Wohldmann P.E."/>
            <person name="Cook L.L."/>
            <person name="Hickenbotham M.T."/>
            <person name="Eldred J."/>
            <person name="Williams D."/>
            <person name="Jones T.A."/>
            <person name="She X."/>
            <person name="Ciccarelli F.D."/>
            <person name="Izaurralde E."/>
            <person name="Taylor J."/>
            <person name="Schmutz J."/>
            <person name="Myers R.M."/>
            <person name="Cox D.R."/>
            <person name="Huang X."/>
            <person name="McPherson J.D."/>
            <person name="Mardis E.R."/>
            <person name="Clifton S.W."/>
            <person name="Warren W.C."/>
            <person name="Chinwalla A.T."/>
            <person name="Eddy S.R."/>
            <person name="Marra M.A."/>
            <person name="Ovcharenko I."/>
            <person name="Furey T.S."/>
            <person name="Miller W."/>
            <person name="Eichler E.E."/>
            <person name="Bork P."/>
            <person name="Suyama M."/>
            <person name="Torrents D."/>
            <person name="Waterston R.H."/>
            <person name="Wilson R.K."/>
        </authorList>
    </citation>
    <scope>NUCLEOTIDE SEQUENCE [LARGE SCALE GENOMIC DNA]</scope>
</reference>
<reference evidence="4" key="2">
    <citation type="journal article" date="2022" name="Nucleic Acids Res.">
        <title>LncRNA CTBP1-DT-encoded microprotein DDUP sustains DNA damage response signalling to trigger dual DNA repair mechanisms.</title>
        <authorList>
            <person name="Yu R."/>
            <person name="Hu Y."/>
            <person name="Zhang S."/>
            <person name="Li X."/>
            <person name="Tang M."/>
            <person name="Yang M."/>
            <person name="Wu X."/>
            <person name="Li Z."/>
            <person name="Liao X."/>
            <person name="Xu Y."/>
            <person name="Li M."/>
            <person name="Chen S."/>
            <person name="Qian W."/>
            <person name="Gong L.Y."/>
            <person name="Song L."/>
            <person name="Li J."/>
        </authorList>
    </citation>
    <scope>PROTEIN SEQUENCE OF 103-115</scope>
    <scope>FUNCTION</scope>
    <scope>INTERACTION WITH ATR; H2AX; PCNA; RAD18 AND RAD51C</scope>
    <scope>SUBCELLULAR LOCATION</scope>
    <scope>INDUCTION</scope>
    <scope>PHOSPHORYLATION</scope>
    <scope>MUTAGENESIS OF THR-174</scope>
</reference>
<dbReference type="EMBL" id="AC092535">
    <property type="status" value="NOT_ANNOTATED_CDS"/>
    <property type="molecule type" value="Genomic_DNA"/>
</dbReference>
<dbReference type="AGR" id="HGNC:28307"/>
<dbReference type="GeneCards" id="CTBP1-DT"/>
<dbReference type="HGNC" id="HGNC:28307">
    <property type="gene designation" value="CTBP1-DT"/>
</dbReference>
<dbReference type="PRO" id="PR:C0HM98"/>
<dbReference type="Proteomes" id="UP000005640">
    <property type="component" value="Unplaced"/>
</dbReference>
<dbReference type="GO" id="GO:0005694">
    <property type="term" value="C:chromosome"/>
    <property type="evidence" value="ECO:0007669"/>
    <property type="project" value="UniProtKB-SubCell"/>
</dbReference>
<dbReference type="GO" id="GO:0005634">
    <property type="term" value="C:nucleus"/>
    <property type="evidence" value="ECO:0000314"/>
    <property type="project" value="UniProtKB"/>
</dbReference>
<dbReference type="GO" id="GO:0006301">
    <property type="term" value="P:postreplication repair"/>
    <property type="evidence" value="ECO:0000315"/>
    <property type="project" value="UniProtKB"/>
</dbReference>
<dbReference type="GO" id="GO:0000725">
    <property type="term" value="P:recombinational repair"/>
    <property type="evidence" value="ECO:0000315"/>
    <property type="project" value="UniProtKB"/>
</dbReference>
<evidence type="ECO:0000256" key="1">
    <source>
        <dbReference type="SAM" id="MobiDB-lite"/>
    </source>
</evidence>
<evidence type="ECO:0000269" key="2">
    <source>
    </source>
</evidence>
<evidence type="ECO:0000303" key="3">
    <source>
    </source>
</evidence>
<evidence type="ECO:0000305" key="4"/>
<evidence type="ECO:0000312" key="5">
    <source>
        <dbReference type="HGNC" id="HGNC:28307"/>
    </source>
</evidence>
<organism>
    <name type="scientific">Homo sapiens</name>
    <name type="common">Human</name>
    <dbReference type="NCBI Taxonomy" id="9606"/>
    <lineage>
        <taxon>Eukaryota</taxon>
        <taxon>Metazoa</taxon>
        <taxon>Chordata</taxon>
        <taxon>Craniata</taxon>
        <taxon>Vertebrata</taxon>
        <taxon>Euteleostomi</taxon>
        <taxon>Mammalia</taxon>
        <taxon>Eutheria</taxon>
        <taxon>Euarchontoglires</taxon>
        <taxon>Primates</taxon>
        <taxon>Haplorrhini</taxon>
        <taxon>Catarrhini</taxon>
        <taxon>Hominidae</taxon>
        <taxon>Homo</taxon>
    </lineage>
</organism>
<protein>
    <recommendedName>
        <fullName evidence="3">DNA damage up-regulated protein</fullName>
        <shortName evidence="3">DDUP</shortName>
    </recommendedName>
</protein>
<sequence>MWLVECTGRDLTGLSCLLSMDRQPRRRQHVAGCRDVPPPLPQGSWGQTSPRHSILCSKSGCDLLGGGEYNGETSGEEFLAPAWTCRAQQAATWLSVQQTSHKALGPAGGAAMSSKLSPEEQFLSRIHFLRTFMCSVAGAELPGIPQATENGEGCRPARDPASSPSSLSMASVYTQCSSAQLVSALS</sequence>
<keyword id="KW-0158">Chromosome</keyword>
<keyword id="KW-0903">Direct protein sequencing</keyword>
<keyword id="KW-0227">DNA damage</keyword>
<keyword id="KW-0234">DNA repair</keyword>
<keyword id="KW-0539">Nucleus</keyword>
<keyword id="KW-0597">Phosphoprotein</keyword>
<keyword id="KW-1185">Reference proteome</keyword>
<accession>C0HM98</accession>
<name>DDUP_HUMAN</name>
<gene>
    <name evidence="5" type="primary">CTBP1-DT</name>
</gene>